<protein>
    <recommendedName>
        <fullName evidence="1">Protein GrpE</fullName>
    </recommendedName>
    <alternativeName>
        <fullName evidence="1">HSP-70 cofactor</fullName>
    </alternativeName>
</protein>
<name>GRPE_STAAR</name>
<evidence type="ECO:0000255" key="1">
    <source>
        <dbReference type="HAMAP-Rule" id="MF_01151"/>
    </source>
</evidence>
<evidence type="ECO:0000256" key="2">
    <source>
        <dbReference type="SAM" id="MobiDB-lite"/>
    </source>
</evidence>
<accession>Q6GGB9</accession>
<feature type="chain" id="PRO_0000113858" description="Protein GrpE">
    <location>
        <begin position="1"/>
        <end position="208"/>
    </location>
</feature>
<feature type="region of interest" description="Disordered" evidence="2">
    <location>
        <begin position="1"/>
        <end position="51"/>
    </location>
</feature>
<feature type="compositionally biased region" description="Basic and acidic residues" evidence="2">
    <location>
        <begin position="1"/>
        <end position="12"/>
    </location>
</feature>
<feature type="compositionally biased region" description="Polar residues" evidence="2">
    <location>
        <begin position="13"/>
        <end position="23"/>
    </location>
</feature>
<feature type="compositionally biased region" description="Acidic residues" evidence="2">
    <location>
        <begin position="42"/>
        <end position="51"/>
    </location>
</feature>
<reference key="1">
    <citation type="journal article" date="2004" name="Proc. Natl. Acad. Sci. U.S.A.">
        <title>Complete genomes of two clinical Staphylococcus aureus strains: evidence for the rapid evolution of virulence and drug resistance.</title>
        <authorList>
            <person name="Holden M.T.G."/>
            <person name="Feil E.J."/>
            <person name="Lindsay J.A."/>
            <person name="Peacock S.J."/>
            <person name="Day N.P.J."/>
            <person name="Enright M.C."/>
            <person name="Foster T.J."/>
            <person name="Moore C.E."/>
            <person name="Hurst L."/>
            <person name="Atkin R."/>
            <person name="Barron A."/>
            <person name="Bason N."/>
            <person name="Bentley S.D."/>
            <person name="Chillingworth C."/>
            <person name="Chillingworth T."/>
            <person name="Churcher C."/>
            <person name="Clark L."/>
            <person name="Corton C."/>
            <person name="Cronin A."/>
            <person name="Doggett J."/>
            <person name="Dowd L."/>
            <person name="Feltwell T."/>
            <person name="Hance Z."/>
            <person name="Harris B."/>
            <person name="Hauser H."/>
            <person name="Holroyd S."/>
            <person name="Jagels K."/>
            <person name="James K.D."/>
            <person name="Lennard N."/>
            <person name="Line A."/>
            <person name="Mayes R."/>
            <person name="Moule S."/>
            <person name="Mungall K."/>
            <person name="Ormond D."/>
            <person name="Quail M.A."/>
            <person name="Rabbinowitsch E."/>
            <person name="Rutherford K.M."/>
            <person name="Sanders M."/>
            <person name="Sharp S."/>
            <person name="Simmonds M."/>
            <person name="Stevens K."/>
            <person name="Whitehead S."/>
            <person name="Barrell B.G."/>
            <person name="Spratt B.G."/>
            <person name="Parkhill J."/>
        </authorList>
    </citation>
    <scope>NUCLEOTIDE SEQUENCE [LARGE SCALE GENOMIC DNA]</scope>
    <source>
        <strain>MRSA252</strain>
    </source>
</reference>
<dbReference type="EMBL" id="BX571856">
    <property type="protein sequence ID" value="CAG40653.1"/>
    <property type="molecule type" value="Genomic_DNA"/>
</dbReference>
<dbReference type="RefSeq" id="WP_000182215.1">
    <property type="nucleotide sequence ID" value="NC_002952.2"/>
</dbReference>
<dbReference type="SMR" id="Q6GGB9"/>
<dbReference type="KEGG" id="sar:SAR1658"/>
<dbReference type="HOGENOM" id="CLU_057217_6_3_9"/>
<dbReference type="Proteomes" id="UP000000596">
    <property type="component" value="Chromosome"/>
</dbReference>
<dbReference type="GO" id="GO:0005737">
    <property type="term" value="C:cytoplasm"/>
    <property type="evidence" value="ECO:0007669"/>
    <property type="project" value="UniProtKB-SubCell"/>
</dbReference>
<dbReference type="GO" id="GO:0000774">
    <property type="term" value="F:adenyl-nucleotide exchange factor activity"/>
    <property type="evidence" value="ECO:0007669"/>
    <property type="project" value="InterPro"/>
</dbReference>
<dbReference type="GO" id="GO:0042803">
    <property type="term" value="F:protein homodimerization activity"/>
    <property type="evidence" value="ECO:0007669"/>
    <property type="project" value="InterPro"/>
</dbReference>
<dbReference type="GO" id="GO:0051087">
    <property type="term" value="F:protein-folding chaperone binding"/>
    <property type="evidence" value="ECO:0007669"/>
    <property type="project" value="InterPro"/>
</dbReference>
<dbReference type="GO" id="GO:0051082">
    <property type="term" value="F:unfolded protein binding"/>
    <property type="evidence" value="ECO:0007669"/>
    <property type="project" value="TreeGrafter"/>
</dbReference>
<dbReference type="GO" id="GO:0006457">
    <property type="term" value="P:protein folding"/>
    <property type="evidence" value="ECO:0007669"/>
    <property type="project" value="InterPro"/>
</dbReference>
<dbReference type="CDD" id="cd00446">
    <property type="entry name" value="GrpE"/>
    <property type="match status" value="1"/>
</dbReference>
<dbReference type="FunFam" id="2.30.22.10:FF:000001">
    <property type="entry name" value="Protein GrpE"/>
    <property type="match status" value="1"/>
</dbReference>
<dbReference type="FunFam" id="3.90.20.20:FF:000002">
    <property type="entry name" value="Protein GrpE"/>
    <property type="match status" value="1"/>
</dbReference>
<dbReference type="Gene3D" id="3.90.20.20">
    <property type="match status" value="1"/>
</dbReference>
<dbReference type="Gene3D" id="2.30.22.10">
    <property type="entry name" value="Head domain of nucleotide exchange factor GrpE"/>
    <property type="match status" value="1"/>
</dbReference>
<dbReference type="HAMAP" id="MF_01151">
    <property type="entry name" value="GrpE"/>
    <property type="match status" value="1"/>
</dbReference>
<dbReference type="InterPro" id="IPR000740">
    <property type="entry name" value="GrpE"/>
</dbReference>
<dbReference type="InterPro" id="IPR013805">
    <property type="entry name" value="GrpE_coiled_coil"/>
</dbReference>
<dbReference type="InterPro" id="IPR009012">
    <property type="entry name" value="GrpE_head"/>
</dbReference>
<dbReference type="NCBIfam" id="NF010738">
    <property type="entry name" value="PRK14140.1"/>
    <property type="match status" value="1"/>
</dbReference>
<dbReference type="PANTHER" id="PTHR21237">
    <property type="entry name" value="GRPE PROTEIN"/>
    <property type="match status" value="1"/>
</dbReference>
<dbReference type="PANTHER" id="PTHR21237:SF23">
    <property type="entry name" value="GRPE PROTEIN HOMOLOG, MITOCHONDRIAL"/>
    <property type="match status" value="1"/>
</dbReference>
<dbReference type="Pfam" id="PF01025">
    <property type="entry name" value="GrpE"/>
    <property type="match status" value="1"/>
</dbReference>
<dbReference type="PRINTS" id="PR00773">
    <property type="entry name" value="GRPEPROTEIN"/>
</dbReference>
<dbReference type="SUPFAM" id="SSF58014">
    <property type="entry name" value="Coiled-coil domain of nucleotide exchange factor GrpE"/>
    <property type="match status" value="1"/>
</dbReference>
<dbReference type="SUPFAM" id="SSF51064">
    <property type="entry name" value="Head domain of nucleotide exchange factor GrpE"/>
    <property type="match status" value="1"/>
</dbReference>
<dbReference type="PROSITE" id="PS01071">
    <property type="entry name" value="GRPE"/>
    <property type="match status" value="1"/>
</dbReference>
<gene>
    <name evidence="1" type="primary">grpE</name>
    <name type="ordered locus">SAR1658</name>
</gene>
<organism>
    <name type="scientific">Staphylococcus aureus (strain MRSA252)</name>
    <dbReference type="NCBI Taxonomy" id="282458"/>
    <lineage>
        <taxon>Bacteria</taxon>
        <taxon>Bacillati</taxon>
        <taxon>Bacillota</taxon>
        <taxon>Bacilli</taxon>
        <taxon>Bacillales</taxon>
        <taxon>Staphylococcaceae</taxon>
        <taxon>Staphylococcus</taxon>
    </lineage>
</organism>
<keyword id="KW-0143">Chaperone</keyword>
<keyword id="KW-0963">Cytoplasm</keyword>
<keyword id="KW-0346">Stress response</keyword>
<proteinExistence type="inferred from homology"/>
<comment type="function">
    <text evidence="1">Participates actively in the response to hyperosmotic and heat shock by preventing the aggregation of stress-denatured proteins, in association with DnaK and GrpE. It is the nucleotide exchange factor for DnaK and may function as a thermosensor. Unfolded proteins bind initially to DnaJ; upon interaction with the DnaJ-bound protein, DnaK hydrolyzes its bound ATP, resulting in the formation of a stable complex. GrpE releases ADP from DnaK; ATP binding to DnaK triggers the release of the substrate protein, thus completing the reaction cycle. Several rounds of ATP-dependent interactions between DnaJ, DnaK and GrpE are required for fully efficient folding.</text>
</comment>
<comment type="subunit">
    <text evidence="1">Homodimer.</text>
</comment>
<comment type="subcellular location">
    <subcellularLocation>
        <location evidence="1">Cytoplasm</location>
    </subcellularLocation>
</comment>
<comment type="similarity">
    <text evidence="1">Belongs to the GrpE family.</text>
</comment>
<sequence length="208" mass="24008">MTNKDESVEKNTESTVEETNVKQNIDDSVEQAEESKGHLQDEAIEETSDENVIEEIDPKDQKINELQQLADENEEKYLRLYAEFENYKRRIQKENEINKTYQAQRVLTDILPAIDNIERALQIEGDDETFKSLQKGVQMVHESLINALKDNGLEVIKTEGEAFDPNIHQAVVQDDNPDFESGEITQELQKGYKLKDRVLRPSMVKVNQ</sequence>